<protein>
    <recommendedName>
        <fullName evidence="1">Putrescine aminotransferase</fullName>
        <shortName evidence="1">PAT</shortName>
        <shortName evidence="1">PATase</shortName>
        <ecNumber evidence="1">2.6.1.82</ecNumber>
    </recommendedName>
    <alternativeName>
        <fullName evidence="1">Cadaverine transaminase</fullName>
    </alternativeName>
    <alternativeName>
        <fullName evidence="1">Diamine transaminase</fullName>
        <ecNumber evidence="1">2.6.1.29</ecNumber>
    </alternativeName>
    <alternativeName>
        <fullName evidence="1">Putrescine transaminase</fullName>
    </alternativeName>
    <alternativeName>
        <fullName evidence="1">Putrescine--2-oxoglutaric acid transaminase</fullName>
    </alternativeName>
</protein>
<reference key="1">
    <citation type="journal article" date="2011" name="J. Bacteriol.">
        <title>Comparative genomics of 28 Salmonella enterica isolates: evidence for CRISPR-mediated adaptive sublineage evolution.</title>
        <authorList>
            <person name="Fricke W.F."/>
            <person name="Mammel M.K."/>
            <person name="McDermott P.F."/>
            <person name="Tartera C."/>
            <person name="White D.G."/>
            <person name="Leclerc J.E."/>
            <person name="Ravel J."/>
            <person name="Cebula T.A."/>
        </authorList>
    </citation>
    <scope>NUCLEOTIDE SEQUENCE [LARGE SCALE GENOMIC DNA]</scope>
    <source>
        <strain>CT_02021853</strain>
    </source>
</reference>
<evidence type="ECO:0000255" key="1">
    <source>
        <dbReference type="HAMAP-Rule" id="MF_01276"/>
    </source>
</evidence>
<name>PAT_SALDC</name>
<sequence length="459" mass="49677">MNRLPSSASALACSAHALNLIEKRTLNHEEMKALNREVIDYFKEHVNPGFLEYRKSVTAGGDYGAVEWQAGSLNTLVDTQGQEFIDCLGGFGIFNVGHRNPVVVSAVQNQLAKQPLHSQELLDPLRAMLAKTLAALTPGKLKYSFFCNSGTESVEAALKLAKAYQSPRGKFTFIATSGAFHGKSLGALSATAKSTFRRPFMPLLPGFRHVPFGNIDAMSMAFSEGKKTGDEIAAVILEPIQGEGGVILPPQGYLTEVRKLCDEFGALMILDEVQTGMGRTGKMFACEHENVQPDILCLAKALGGGVMPIGATIATEEVFSVLFDNPFLHTTTFGGNPLACAAALATINVLLEQNLPAQAEQKGDTLLDGFRQLAREYPNLVHDARGKGMLIAIEFVDNETGYRFASEMFRQRVLVAGTLNNAKTIRIEPPLTLTIELCEQVLKSARNALAAMQVSVEEV</sequence>
<dbReference type="EC" id="2.6.1.82" evidence="1"/>
<dbReference type="EC" id="2.6.1.29" evidence="1"/>
<dbReference type="EMBL" id="CP001144">
    <property type="protein sequence ID" value="ACH77510.1"/>
    <property type="molecule type" value="Genomic_DNA"/>
</dbReference>
<dbReference type="SMR" id="B5FHV3"/>
<dbReference type="KEGG" id="sed:SeD_A3575"/>
<dbReference type="HOGENOM" id="CLU_016922_10_0_6"/>
<dbReference type="UniPathway" id="UPA00188">
    <property type="reaction ID" value="UER00290"/>
</dbReference>
<dbReference type="Proteomes" id="UP000008322">
    <property type="component" value="Chromosome"/>
</dbReference>
<dbReference type="GO" id="GO:0019161">
    <property type="term" value="F:diamine transaminase activity"/>
    <property type="evidence" value="ECO:0007669"/>
    <property type="project" value="UniProtKB-EC"/>
</dbReference>
<dbReference type="GO" id="GO:0042802">
    <property type="term" value="F:identical protein binding"/>
    <property type="evidence" value="ECO:0007669"/>
    <property type="project" value="TreeGrafter"/>
</dbReference>
<dbReference type="GO" id="GO:0033094">
    <property type="term" value="F:putrescine--2-oxoglutarate transaminase activity"/>
    <property type="evidence" value="ECO:0007669"/>
    <property type="project" value="UniProtKB-UniRule"/>
</dbReference>
<dbReference type="GO" id="GO:0030170">
    <property type="term" value="F:pyridoxal phosphate binding"/>
    <property type="evidence" value="ECO:0007669"/>
    <property type="project" value="UniProtKB-UniRule"/>
</dbReference>
<dbReference type="GO" id="GO:0019477">
    <property type="term" value="P:L-lysine catabolic process"/>
    <property type="evidence" value="ECO:0007669"/>
    <property type="project" value="UniProtKB-UniRule"/>
</dbReference>
<dbReference type="GO" id="GO:0009447">
    <property type="term" value="P:putrescine catabolic process"/>
    <property type="evidence" value="ECO:0007669"/>
    <property type="project" value="UniProtKB-UniRule"/>
</dbReference>
<dbReference type="CDD" id="cd00610">
    <property type="entry name" value="OAT_like"/>
    <property type="match status" value="1"/>
</dbReference>
<dbReference type="FunFam" id="3.40.640.10:FF:000004">
    <property type="entry name" value="Acetylornithine aminotransferase"/>
    <property type="match status" value="1"/>
</dbReference>
<dbReference type="Gene3D" id="3.90.1150.10">
    <property type="entry name" value="Aspartate Aminotransferase, domain 1"/>
    <property type="match status" value="1"/>
</dbReference>
<dbReference type="Gene3D" id="3.40.640.10">
    <property type="entry name" value="Type I PLP-dependent aspartate aminotransferase-like (Major domain)"/>
    <property type="match status" value="1"/>
</dbReference>
<dbReference type="HAMAP" id="MF_01276">
    <property type="entry name" value="Putres_aminotrans_3"/>
    <property type="match status" value="1"/>
</dbReference>
<dbReference type="InterPro" id="IPR005814">
    <property type="entry name" value="Aminotrans_3"/>
</dbReference>
<dbReference type="InterPro" id="IPR049704">
    <property type="entry name" value="Aminotrans_3_PPA_site"/>
</dbReference>
<dbReference type="InterPro" id="IPR050103">
    <property type="entry name" value="Class-III_PLP-dep_AT"/>
</dbReference>
<dbReference type="InterPro" id="IPR017747">
    <property type="entry name" value="Putrescine_aminotransferase"/>
</dbReference>
<dbReference type="InterPro" id="IPR015424">
    <property type="entry name" value="PyrdxlP-dep_Trfase"/>
</dbReference>
<dbReference type="InterPro" id="IPR015421">
    <property type="entry name" value="PyrdxlP-dep_Trfase_major"/>
</dbReference>
<dbReference type="InterPro" id="IPR015422">
    <property type="entry name" value="PyrdxlP-dep_Trfase_small"/>
</dbReference>
<dbReference type="NCBIfam" id="NF008570">
    <property type="entry name" value="PRK11522.1"/>
    <property type="match status" value="1"/>
</dbReference>
<dbReference type="NCBIfam" id="TIGR03372">
    <property type="entry name" value="putres_am_tran"/>
    <property type="match status" value="1"/>
</dbReference>
<dbReference type="PANTHER" id="PTHR11986">
    <property type="entry name" value="AMINOTRANSFERASE CLASS III"/>
    <property type="match status" value="1"/>
</dbReference>
<dbReference type="PANTHER" id="PTHR11986:SF112">
    <property type="entry name" value="PUTRESCINE AMINOTRANSFERASE"/>
    <property type="match status" value="1"/>
</dbReference>
<dbReference type="Pfam" id="PF00202">
    <property type="entry name" value="Aminotran_3"/>
    <property type="match status" value="1"/>
</dbReference>
<dbReference type="PIRSF" id="PIRSF000521">
    <property type="entry name" value="Transaminase_4ab_Lys_Orn"/>
    <property type="match status" value="1"/>
</dbReference>
<dbReference type="SUPFAM" id="SSF53383">
    <property type="entry name" value="PLP-dependent transferases"/>
    <property type="match status" value="1"/>
</dbReference>
<dbReference type="PROSITE" id="PS00600">
    <property type="entry name" value="AA_TRANSFER_CLASS_3"/>
    <property type="match status" value="1"/>
</dbReference>
<keyword id="KW-0032">Aminotransferase</keyword>
<keyword id="KW-0663">Pyridoxal phosphate</keyword>
<keyword id="KW-0808">Transferase</keyword>
<comment type="function">
    <text evidence="1">Catalyzes the aminotransferase reaction from putrescine to 2-oxoglutarate, leading to glutamate and 4-aminobutanal, which spontaneously cyclizes to form 1-pyrroline. This is the first step in one of two pathways for putrescine degradation, where putrescine is converted into 4-aminobutanoate (gamma-aminobutyrate or GABA) via 4-aminobutanal. Also functions as a cadaverine transaminase in a a L-lysine degradation pathway to succinate that proceeds via cadaverine, glutarate and L-2-hydroxyglutarate.</text>
</comment>
<comment type="catalytic activity">
    <reaction evidence="1">
        <text>an alkane-alpha,omega-diamine + 2-oxoglutarate = an omega-aminoaldehyde + L-glutamate</text>
        <dbReference type="Rhea" id="RHEA:18217"/>
        <dbReference type="Rhea" id="RHEA-COMP:9766"/>
        <dbReference type="Rhea" id="RHEA-COMP:12750"/>
        <dbReference type="ChEBI" id="CHEBI:16810"/>
        <dbReference type="ChEBI" id="CHEBI:29985"/>
        <dbReference type="ChEBI" id="CHEBI:70977"/>
        <dbReference type="ChEBI" id="CHEBI:133427"/>
        <dbReference type="EC" id="2.6.1.29"/>
    </reaction>
    <physiologicalReaction direction="left-to-right" evidence="1">
        <dbReference type="Rhea" id="RHEA:18218"/>
    </physiologicalReaction>
</comment>
<comment type="catalytic activity">
    <reaction evidence="1">
        <text>putrescine + 2-oxoglutarate = 1-pyrroline + L-glutamate + H2O</text>
        <dbReference type="Rhea" id="RHEA:12268"/>
        <dbReference type="ChEBI" id="CHEBI:15377"/>
        <dbReference type="ChEBI" id="CHEBI:16810"/>
        <dbReference type="ChEBI" id="CHEBI:29985"/>
        <dbReference type="ChEBI" id="CHEBI:36781"/>
        <dbReference type="ChEBI" id="CHEBI:326268"/>
        <dbReference type="EC" id="2.6.1.82"/>
    </reaction>
    <physiologicalReaction direction="left-to-right" evidence="1">
        <dbReference type="Rhea" id="RHEA:12269"/>
    </physiologicalReaction>
</comment>
<comment type="catalytic activity">
    <reaction evidence="1">
        <text>cadaverine + 2-oxoglutarate = 5-aminopentanal + L-glutamate</text>
        <dbReference type="Rhea" id="RHEA:61624"/>
        <dbReference type="ChEBI" id="CHEBI:16810"/>
        <dbReference type="ChEBI" id="CHEBI:29985"/>
        <dbReference type="ChEBI" id="CHEBI:58384"/>
        <dbReference type="ChEBI" id="CHEBI:144896"/>
    </reaction>
    <physiologicalReaction direction="left-to-right" evidence="1">
        <dbReference type="Rhea" id="RHEA:61625"/>
    </physiologicalReaction>
</comment>
<comment type="cofactor">
    <cofactor evidence="1">
        <name>pyridoxal 5'-phosphate</name>
        <dbReference type="ChEBI" id="CHEBI:597326"/>
    </cofactor>
</comment>
<comment type="pathway">
    <text evidence="1">Amine and polyamine degradation; putrescine degradation; 4-aminobutanal from putrescine (transaminase route): step 1/1.</text>
</comment>
<comment type="similarity">
    <text evidence="1">Belongs to the class-III pyridoxal-phosphate-dependent aminotransferase family. Putrescine aminotransferase subfamily.</text>
</comment>
<accession>B5FHV3</accession>
<feature type="chain" id="PRO_1000140279" description="Putrescine aminotransferase">
    <location>
        <begin position="1"/>
        <end position="459"/>
    </location>
</feature>
<feature type="binding site" description="in other chain" evidence="1">
    <location>
        <begin position="150"/>
        <end position="151"/>
    </location>
    <ligand>
        <name>pyridoxal 5'-phosphate</name>
        <dbReference type="ChEBI" id="CHEBI:597326"/>
        <note>ligand shared between dimeric partners</note>
    </ligand>
</feature>
<feature type="binding site" description="in other chain" evidence="1">
    <location>
        <position position="274"/>
    </location>
    <ligand>
        <name>pyridoxal 5'-phosphate</name>
        <dbReference type="ChEBI" id="CHEBI:597326"/>
        <note>ligand shared between dimeric partners</note>
    </ligand>
</feature>
<feature type="binding site" evidence="1">
    <location>
        <position position="332"/>
    </location>
    <ligand>
        <name>pyridoxal 5'-phosphate</name>
        <dbReference type="ChEBI" id="CHEBI:597326"/>
        <note>ligand shared between dimeric partners</note>
    </ligand>
</feature>
<feature type="modified residue" description="N6-(pyridoxal phosphate)lysine" evidence="1">
    <location>
        <position position="300"/>
    </location>
</feature>
<proteinExistence type="inferred from homology"/>
<gene>
    <name evidence="1" type="primary">patA</name>
    <name type="ordered locus">SeD_A3575</name>
</gene>
<organism>
    <name type="scientific">Salmonella dublin (strain CT_02021853)</name>
    <dbReference type="NCBI Taxonomy" id="439851"/>
    <lineage>
        <taxon>Bacteria</taxon>
        <taxon>Pseudomonadati</taxon>
        <taxon>Pseudomonadota</taxon>
        <taxon>Gammaproteobacteria</taxon>
        <taxon>Enterobacterales</taxon>
        <taxon>Enterobacteriaceae</taxon>
        <taxon>Salmonella</taxon>
    </lineage>
</organism>